<accession>B4S4Q8</accession>
<comment type="function">
    <text evidence="1">Catalyzes the transfer of the enolpyruvyl moiety of phosphoenolpyruvate (PEP) to the 5-hydroxyl of shikimate-3-phosphate (S3P) to produce enolpyruvyl shikimate-3-phosphate and inorganic phosphate.</text>
</comment>
<comment type="catalytic activity">
    <reaction evidence="1">
        <text>3-phosphoshikimate + phosphoenolpyruvate = 5-O-(1-carboxyvinyl)-3-phosphoshikimate + phosphate</text>
        <dbReference type="Rhea" id="RHEA:21256"/>
        <dbReference type="ChEBI" id="CHEBI:43474"/>
        <dbReference type="ChEBI" id="CHEBI:57701"/>
        <dbReference type="ChEBI" id="CHEBI:58702"/>
        <dbReference type="ChEBI" id="CHEBI:145989"/>
        <dbReference type="EC" id="2.5.1.19"/>
    </reaction>
    <physiologicalReaction direction="left-to-right" evidence="1">
        <dbReference type="Rhea" id="RHEA:21257"/>
    </physiologicalReaction>
</comment>
<comment type="pathway">
    <text evidence="1">Metabolic intermediate biosynthesis; chorismate biosynthesis; chorismate from D-erythrose 4-phosphate and phosphoenolpyruvate: step 6/7.</text>
</comment>
<comment type="subunit">
    <text evidence="1">Monomer.</text>
</comment>
<comment type="subcellular location">
    <subcellularLocation>
        <location evidence="1">Cytoplasm</location>
    </subcellularLocation>
</comment>
<comment type="similarity">
    <text evidence="1">Belongs to the EPSP synthase family.</text>
</comment>
<dbReference type="EC" id="2.5.1.19" evidence="1"/>
<dbReference type="EMBL" id="CP001108">
    <property type="protein sequence ID" value="ACF46954.1"/>
    <property type="molecule type" value="Genomic_DNA"/>
</dbReference>
<dbReference type="RefSeq" id="WP_012506487.1">
    <property type="nucleotide sequence ID" value="NC_011059.1"/>
</dbReference>
<dbReference type="SMR" id="B4S4Q8"/>
<dbReference type="STRING" id="290512.Paes_1942"/>
<dbReference type="KEGG" id="paa:Paes_1942"/>
<dbReference type="eggNOG" id="COG0128">
    <property type="taxonomic scope" value="Bacteria"/>
</dbReference>
<dbReference type="HOGENOM" id="CLU_024321_0_1_10"/>
<dbReference type="UniPathway" id="UPA00053">
    <property type="reaction ID" value="UER00089"/>
</dbReference>
<dbReference type="Proteomes" id="UP000002725">
    <property type="component" value="Chromosome"/>
</dbReference>
<dbReference type="GO" id="GO:0005737">
    <property type="term" value="C:cytoplasm"/>
    <property type="evidence" value="ECO:0007669"/>
    <property type="project" value="UniProtKB-SubCell"/>
</dbReference>
<dbReference type="GO" id="GO:0003866">
    <property type="term" value="F:3-phosphoshikimate 1-carboxyvinyltransferase activity"/>
    <property type="evidence" value="ECO:0007669"/>
    <property type="project" value="UniProtKB-UniRule"/>
</dbReference>
<dbReference type="GO" id="GO:0008652">
    <property type="term" value="P:amino acid biosynthetic process"/>
    <property type="evidence" value="ECO:0007669"/>
    <property type="project" value="UniProtKB-KW"/>
</dbReference>
<dbReference type="GO" id="GO:0009073">
    <property type="term" value="P:aromatic amino acid family biosynthetic process"/>
    <property type="evidence" value="ECO:0007669"/>
    <property type="project" value="UniProtKB-KW"/>
</dbReference>
<dbReference type="GO" id="GO:0009423">
    <property type="term" value="P:chorismate biosynthetic process"/>
    <property type="evidence" value="ECO:0007669"/>
    <property type="project" value="UniProtKB-UniRule"/>
</dbReference>
<dbReference type="CDD" id="cd01556">
    <property type="entry name" value="EPSP_synthase"/>
    <property type="match status" value="1"/>
</dbReference>
<dbReference type="FunFam" id="3.65.10.10:FF:000005">
    <property type="entry name" value="3-phosphoshikimate 1-carboxyvinyltransferase"/>
    <property type="match status" value="1"/>
</dbReference>
<dbReference type="Gene3D" id="3.65.10.10">
    <property type="entry name" value="Enolpyruvate transferase domain"/>
    <property type="match status" value="2"/>
</dbReference>
<dbReference type="HAMAP" id="MF_00210">
    <property type="entry name" value="EPSP_synth"/>
    <property type="match status" value="1"/>
</dbReference>
<dbReference type="InterPro" id="IPR001986">
    <property type="entry name" value="Enolpyruvate_Tfrase_dom"/>
</dbReference>
<dbReference type="InterPro" id="IPR036968">
    <property type="entry name" value="Enolpyruvate_Tfrase_sf"/>
</dbReference>
<dbReference type="InterPro" id="IPR006264">
    <property type="entry name" value="EPSP_synthase"/>
</dbReference>
<dbReference type="InterPro" id="IPR023193">
    <property type="entry name" value="EPSP_synthase_CS"/>
</dbReference>
<dbReference type="InterPro" id="IPR013792">
    <property type="entry name" value="RNA3'P_cycl/enolpyr_Trfase_a/b"/>
</dbReference>
<dbReference type="NCBIfam" id="TIGR01356">
    <property type="entry name" value="aroA"/>
    <property type="match status" value="1"/>
</dbReference>
<dbReference type="PANTHER" id="PTHR21090">
    <property type="entry name" value="AROM/DEHYDROQUINATE SYNTHASE"/>
    <property type="match status" value="1"/>
</dbReference>
<dbReference type="PANTHER" id="PTHR21090:SF5">
    <property type="entry name" value="PENTAFUNCTIONAL AROM POLYPEPTIDE"/>
    <property type="match status" value="1"/>
</dbReference>
<dbReference type="Pfam" id="PF00275">
    <property type="entry name" value="EPSP_synthase"/>
    <property type="match status" value="1"/>
</dbReference>
<dbReference type="PIRSF" id="PIRSF000505">
    <property type="entry name" value="EPSPS"/>
    <property type="match status" value="1"/>
</dbReference>
<dbReference type="SUPFAM" id="SSF55205">
    <property type="entry name" value="EPT/RTPC-like"/>
    <property type="match status" value="1"/>
</dbReference>
<dbReference type="PROSITE" id="PS00885">
    <property type="entry name" value="EPSP_SYNTHASE_2"/>
    <property type="match status" value="1"/>
</dbReference>
<proteinExistence type="inferred from homology"/>
<feature type="chain" id="PRO_1000099739" description="3-phosphoshikimate 1-carboxyvinyltransferase">
    <location>
        <begin position="1"/>
        <end position="434"/>
    </location>
</feature>
<feature type="active site" description="Proton acceptor" evidence="1">
    <location>
        <position position="319"/>
    </location>
</feature>
<feature type="binding site" evidence="1">
    <location>
        <position position="15"/>
    </location>
    <ligand>
        <name>3-phosphoshikimate</name>
        <dbReference type="ChEBI" id="CHEBI:145989"/>
    </ligand>
</feature>
<feature type="binding site" evidence="1">
    <location>
        <position position="15"/>
    </location>
    <ligand>
        <name>phosphoenolpyruvate</name>
        <dbReference type="ChEBI" id="CHEBI:58702"/>
    </ligand>
</feature>
<feature type="binding site" evidence="1">
    <location>
        <position position="16"/>
    </location>
    <ligand>
        <name>3-phosphoshikimate</name>
        <dbReference type="ChEBI" id="CHEBI:145989"/>
    </ligand>
</feature>
<feature type="binding site" evidence="1">
    <location>
        <position position="20"/>
    </location>
    <ligand>
        <name>3-phosphoshikimate</name>
        <dbReference type="ChEBI" id="CHEBI:145989"/>
    </ligand>
</feature>
<feature type="binding site" evidence="1">
    <location>
        <position position="96"/>
    </location>
    <ligand>
        <name>phosphoenolpyruvate</name>
        <dbReference type="ChEBI" id="CHEBI:58702"/>
    </ligand>
</feature>
<feature type="binding site" evidence="1">
    <location>
        <position position="124"/>
    </location>
    <ligand>
        <name>phosphoenolpyruvate</name>
        <dbReference type="ChEBI" id="CHEBI:58702"/>
    </ligand>
</feature>
<feature type="binding site" evidence="1">
    <location>
        <position position="169"/>
    </location>
    <ligand>
        <name>3-phosphoshikimate</name>
        <dbReference type="ChEBI" id="CHEBI:145989"/>
    </ligand>
</feature>
<feature type="binding site" evidence="1">
    <location>
        <position position="171"/>
    </location>
    <ligand>
        <name>3-phosphoshikimate</name>
        <dbReference type="ChEBI" id="CHEBI:145989"/>
    </ligand>
</feature>
<feature type="binding site" evidence="1">
    <location>
        <position position="171"/>
    </location>
    <ligand>
        <name>phosphoenolpyruvate</name>
        <dbReference type="ChEBI" id="CHEBI:58702"/>
    </ligand>
</feature>
<feature type="binding site" evidence="1">
    <location>
        <position position="195"/>
    </location>
    <ligand>
        <name>3-phosphoshikimate</name>
        <dbReference type="ChEBI" id="CHEBI:145989"/>
    </ligand>
</feature>
<feature type="binding site" evidence="1">
    <location>
        <position position="319"/>
    </location>
    <ligand>
        <name>3-phosphoshikimate</name>
        <dbReference type="ChEBI" id="CHEBI:145989"/>
    </ligand>
</feature>
<feature type="binding site" evidence="1">
    <location>
        <position position="346"/>
    </location>
    <ligand>
        <name>3-phosphoshikimate</name>
        <dbReference type="ChEBI" id="CHEBI:145989"/>
    </ligand>
</feature>
<feature type="binding site" evidence="1">
    <location>
        <position position="350"/>
    </location>
    <ligand>
        <name>phosphoenolpyruvate</name>
        <dbReference type="ChEBI" id="CHEBI:58702"/>
    </ligand>
</feature>
<feature type="binding site" evidence="1">
    <location>
        <position position="394"/>
    </location>
    <ligand>
        <name>phosphoenolpyruvate</name>
        <dbReference type="ChEBI" id="CHEBI:58702"/>
    </ligand>
</feature>
<keyword id="KW-0028">Amino-acid biosynthesis</keyword>
<keyword id="KW-0057">Aromatic amino acid biosynthesis</keyword>
<keyword id="KW-0963">Cytoplasm</keyword>
<keyword id="KW-0808">Transferase</keyword>
<sequence>MTAYKGEVFNLPPDKSISHRAALIGALADGTTEISNFSGGFDNQSTLGVLQACGIRLSQDIVQGADGRQTRHVVLHSSGLWSFSAPDAPLMCNNSGSTMRMFAGILAGQPFDSTLVGDNSLMKRPMKRIADPLRRMGAGISLSPDGTAPVGINGTRDLKPITYELPMPSAQVKSLVAFAALHADGESRVIETLPSRNHTELMLDLKTEALSDGRRAVIIPGGKSLEARPFHIPADPSAACFMIALGLLVPGSEILLRDVCLNPTRAGYIELLIGAGADIGFENRRVIGGETIGDIVVRYSGSVEPLRIDEPSIVANIIDEIPMLAVFSACATAEFELHHAAELRTKESDRISAVVSNLQRLGFLCEEFPDGFAVKGRQRVPSGKVILESYDDHRIAMSFAIADKALESELEISDREIIGVSFPNFFDIIESLRQ</sequence>
<organism>
    <name type="scientific">Prosthecochloris aestuarii (strain DSM 271 / SK 413)</name>
    <dbReference type="NCBI Taxonomy" id="290512"/>
    <lineage>
        <taxon>Bacteria</taxon>
        <taxon>Pseudomonadati</taxon>
        <taxon>Chlorobiota</taxon>
        <taxon>Chlorobiia</taxon>
        <taxon>Chlorobiales</taxon>
        <taxon>Chlorobiaceae</taxon>
        <taxon>Prosthecochloris</taxon>
    </lineage>
</organism>
<name>AROA_PROA2</name>
<reference key="1">
    <citation type="submission" date="2008-06" db="EMBL/GenBank/DDBJ databases">
        <title>Complete sequence of chromosome of Prosthecochloris aestuarii DSM 271.</title>
        <authorList>
            <consortium name="US DOE Joint Genome Institute"/>
            <person name="Lucas S."/>
            <person name="Copeland A."/>
            <person name="Lapidus A."/>
            <person name="Glavina del Rio T."/>
            <person name="Dalin E."/>
            <person name="Tice H."/>
            <person name="Bruce D."/>
            <person name="Goodwin L."/>
            <person name="Pitluck S."/>
            <person name="Schmutz J."/>
            <person name="Larimer F."/>
            <person name="Land M."/>
            <person name="Hauser L."/>
            <person name="Kyrpides N."/>
            <person name="Anderson I."/>
            <person name="Liu Z."/>
            <person name="Li T."/>
            <person name="Zhao F."/>
            <person name="Overmann J."/>
            <person name="Bryant D.A."/>
            <person name="Richardson P."/>
        </authorList>
    </citation>
    <scope>NUCLEOTIDE SEQUENCE [LARGE SCALE GENOMIC DNA]</scope>
    <source>
        <strain>DSM 271 / SK 413</strain>
    </source>
</reference>
<evidence type="ECO:0000255" key="1">
    <source>
        <dbReference type="HAMAP-Rule" id="MF_00210"/>
    </source>
</evidence>
<protein>
    <recommendedName>
        <fullName evidence="1">3-phosphoshikimate 1-carboxyvinyltransferase</fullName>
        <ecNumber evidence="1">2.5.1.19</ecNumber>
    </recommendedName>
    <alternativeName>
        <fullName evidence="1">5-enolpyruvylshikimate-3-phosphate synthase</fullName>
        <shortName evidence="1">EPSP synthase</shortName>
        <shortName evidence="1">EPSPS</shortName>
    </alternativeName>
</protein>
<gene>
    <name evidence="1" type="primary">aroA</name>
    <name type="ordered locus">Paes_1942</name>
</gene>